<protein>
    <recommendedName>
        <fullName evidence="1">Antiholin-like protein LrgB</fullName>
    </recommendedName>
</protein>
<evidence type="ECO:0000255" key="1">
    <source>
        <dbReference type="HAMAP-Rule" id="MF_01142"/>
    </source>
</evidence>
<accession>Q5HJB3</accession>
<reference key="1">
    <citation type="journal article" date="2005" name="J. Bacteriol.">
        <title>Insights on evolution of virulence and resistance from the complete genome analysis of an early methicillin-resistant Staphylococcus aureus strain and a biofilm-producing methicillin-resistant Staphylococcus epidermidis strain.</title>
        <authorList>
            <person name="Gill S.R."/>
            <person name="Fouts D.E."/>
            <person name="Archer G.L."/>
            <person name="Mongodin E.F."/>
            <person name="DeBoy R.T."/>
            <person name="Ravel J."/>
            <person name="Paulsen I.T."/>
            <person name="Kolonay J.F."/>
            <person name="Brinkac L.M."/>
            <person name="Beanan M.J."/>
            <person name="Dodson R.J."/>
            <person name="Daugherty S.C."/>
            <person name="Madupu R."/>
            <person name="Angiuoli S.V."/>
            <person name="Durkin A.S."/>
            <person name="Haft D.H."/>
            <person name="Vamathevan J.J."/>
            <person name="Khouri H."/>
            <person name="Utterback T.R."/>
            <person name="Lee C."/>
            <person name="Dimitrov G."/>
            <person name="Jiang L."/>
            <person name="Qin H."/>
            <person name="Weidman J."/>
            <person name="Tran K."/>
            <person name="Kang K.H."/>
            <person name="Hance I.R."/>
            <person name="Nelson K.E."/>
            <person name="Fraser C.M."/>
        </authorList>
    </citation>
    <scope>NUCLEOTIDE SEQUENCE [LARGE SCALE GENOMIC DNA]</scope>
    <source>
        <strain>COL</strain>
    </source>
</reference>
<name>LRGB_STAAC</name>
<keyword id="KW-1003">Cell membrane</keyword>
<keyword id="KW-0204">Cytolysis</keyword>
<keyword id="KW-0472">Membrane</keyword>
<keyword id="KW-0812">Transmembrane</keyword>
<keyword id="KW-1133">Transmembrane helix</keyword>
<organism>
    <name type="scientific">Staphylococcus aureus (strain COL)</name>
    <dbReference type="NCBI Taxonomy" id="93062"/>
    <lineage>
        <taxon>Bacteria</taxon>
        <taxon>Bacillati</taxon>
        <taxon>Bacillota</taxon>
        <taxon>Bacilli</taxon>
        <taxon>Bacillales</taxon>
        <taxon>Staphylococcaceae</taxon>
        <taxon>Staphylococcus</taxon>
    </lineage>
</organism>
<comment type="function">
    <text evidence="1">Inhibits the expression or activity of extracellular murein hydrolases by interacting, possibly with LrgA, with the holin-like proteins CidA and/or CidB. The LrgAB and CidAB proteins may affect the proton motive force of the membrane. May be involved in programmed cell death (PCD), possibly triggering PCD in response to antibiotics and environmental stresses.</text>
</comment>
<comment type="subcellular location">
    <subcellularLocation>
        <location evidence="1">Cell membrane</location>
        <topology evidence="1">Multi-pass membrane protein</topology>
    </subcellularLocation>
</comment>
<comment type="similarity">
    <text evidence="1">Belongs to the CidB/LrgB family. LrgB subfamily.</text>
</comment>
<gene>
    <name evidence="1" type="primary">lrgB</name>
    <name type="ordered locus">SACOL0248</name>
</gene>
<proteinExistence type="inferred from homology"/>
<dbReference type="EMBL" id="CP000046">
    <property type="protein sequence ID" value="AAW38803.1"/>
    <property type="molecule type" value="Genomic_DNA"/>
</dbReference>
<dbReference type="RefSeq" id="WP_000607067.1">
    <property type="nucleotide sequence ID" value="NZ_JBGOFO010000001.1"/>
</dbReference>
<dbReference type="KEGG" id="sac:SACOL0248"/>
<dbReference type="HOGENOM" id="CLU_082099_1_0_9"/>
<dbReference type="Proteomes" id="UP000000530">
    <property type="component" value="Chromosome"/>
</dbReference>
<dbReference type="GO" id="GO:0005886">
    <property type="term" value="C:plasma membrane"/>
    <property type="evidence" value="ECO:0007669"/>
    <property type="project" value="UniProtKB-SubCell"/>
</dbReference>
<dbReference type="GO" id="GO:0019835">
    <property type="term" value="P:cytolysis"/>
    <property type="evidence" value="ECO:0007669"/>
    <property type="project" value="UniProtKB-UniRule"/>
</dbReference>
<dbReference type="GO" id="GO:0031640">
    <property type="term" value="P:killing of cells of another organism"/>
    <property type="evidence" value="ECO:0007669"/>
    <property type="project" value="UniProtKB-KW"/>
</dbReference>
<dbReference type="GO" id="GO:0012501">
    <property type="term" value="P:programmed cell death"/>
    <property type="evidence" value="ECO:0007669"/>
    <property type="project" value="UniProtKB-UniRule"/>
</dbReference>
<dbReference type="HAMAP" id="MF_01142">
    <property type="entry name" value="LrgB"/>
    <property type="match status" value="1"/>
</dbReference>
<dbReference type="InterPro" id="IPR024891">
    <property type="entry name" value="Antiholin-like_LrgB"/>
</dbReference>
<dbReference type="InterPro" id="IPR007300">
    <property type="entry name" value="CidB/LrgB"/>
</dbReference>
<dbReference type="NCBIfam" id="NF003291">
    <property type="entry name" value="PRK04288.1"/>
    <property type="match status" value="1"/>
</dbReference>
<dbReference type="PANTHER" id="PTHR30249:SF0">
    <property type="entry name" value="PLASTIDAL GLYCOLATE_GLYCERATE TRANSLOCATOR 1, CHLOROPLASTIC"/>
    <property type="match status" value="1"/>
</dbReference>
<dbReference type="PANTHER" id="PTHR30249">
    <property type="entry name" value="PUTATIVE SEROTONIN TRANSPORTER"/>
    <property type="match status" value="1"/>
</dbReference>
<dbReference type="Pfam" id="PF04172">
    <property type="entry name" value="LrgB"/>
    <property type="match status" value="1"/>
</dbReference>
<feature type="chain" id="PRO_0000217056" description="Antiholin-like protein LrgB">
    <location>
        <begin position="1"/>
        <end position="233"/>
    </location>
</feature>
<feature type="transmembrane region" description="Helical" evidence="1">
    <location>
        <begin position="9"/>
        <end position="29"/>
    </location>
</feature>
<feature type="transmembrane region" description="Helical" evidence="1">
    <location>
        <begin position="34"/>
        <end position="54"/>
    </location>
</feature>
<feature type="transmembrane region" description="Helical" evidence="1">
    <location>
        <begin position="63"/>
        <end position="83"/>
    </location>
</feature>
<feature type="transmembrane region" description="Helical" evidence="1">
    <location>
        <begin position="97"/>
        <end position="117"/>
    </location>
</feature>
<feature type="transmembrane region" description="Helical" evidence="1">
    <location>
        <begin position="121"/>
        <end position="141"/>
    </location>
</feature>
<feature type="transmembrane region" description="Helical" evidence="1">
    <location>
        <begin position="144"/>
        <end position="164"/>
    </location>
</feature>
<feature type="transmembrane region" description="Helical" evidence="1">
    <location>
        <begin position="212"/>
        <end position="232"/>
    </location>
</feature>
<sequence>MINHLALNTPYFGILLSVIPFFLATILFEKTNRFFLFAPLFVSMVFGVAFLYLTGIPYKTYKIGGDIIYFFLEPATICFAIPLYKKREVLVKHWHRIIGGIGIGTVVALLIILTFAKLAQFANDVILSMLPQAATTAIALPVSAGIGGIKELTSLAVILNGVIIYALGNKFLKLFRITNPIARGLALGTSGHTLGVAPAKELGPVEESMASIALVLVGVVVVAVVPVFVAIFF</sequence>